<name>VCP_APIME</name>
<comment type="catalytic activity">
    <reaction evidence="3 4">
        <text>Release of a C-terminal amino acid with broad specificity.</text>
        <dbReference type="EC" id="3.4.16.5"/>
    </reaction>
</comment>
<comment type="subcellular location">
    <subcellularLocation>
        <location evidence="1">Secreted</location>
    </subcellularLocation>
</comment>
<comment type="tissue specificity">
    <text>Expressed by the venom duct.</text>
</comment>
<comment type="allergen">
    <text evidence="1">Causes an allergic reaction in human.</text>
</comment>
<comment type="similarity">
    <text evidence="5">Belongs to the peptidase S10 family.</text>
</comment>
<proteinExistence type="evidence at transcript level"/>
<organism>
    <name type="scientific">Apis mellifera</name>
    <name type="common">Honeybee</name>
    <dbReference type="NCBI Taxonomy" id="7460"/>
    <lineage>
        <taxon>Eukaryota</taxon>
        <taxon>Metazoa</taxon>
        <taxon>Ecdysozoa</taxon>
        <taxon>Arthropoda</taxon>
        <taxon>Hexapoda</taxon>
        <taxon>Insecta</taxon>
        <taxon>Pterygota</taxon>
        <taxon>Neoptera</taxon>
        <taxon>Endopterygota</taxon>
        <taxon>Hymenoptera</taxon>
        <taxon>Apocrita</taxon>
        <taxon>Aculeata</taxon>
        <taxon>Apoidea</taxon>
        <taxon>Anthophila</taxon>
        <taxon>Apidae</taxon>
        <taxon>Apis</taxon>
    </lineage>
</organism>
<feature type="signal peptide" evidence="2">
    <location>
        <begin position="1"/>
        <end position="18"/>
    </location>
</feature>
<feature type="chain" id="PRO_5000525219" description="Venom serine carboxypeptidase">
    <location>
        <begin position="19"/>
        <end position="467"/>
    </location>
</feature>
<feature type="active site" evidence="1">
    <location>
        <position position="202"/>
    </location>
</feature>
<feature type="active site" evidence="1">
    <location>
        <position position="387"/>
    </location>
</feature>
<feature type="active site" evidence="1">
    <location>
        <position position="444"/>
    </location>
</feature>
<feature type="glycosylation site" description="N-linked (GlcNAc...) asparagine" evidence="2">
    <location>
        <position position="130"/>
    </location>
</feature>
<feature type="glycosylation site" description="N-linked (GlcNAc...) asparagine" evidence="2">
    <location>
        <position position="169"/>
    </location>
</feature>
<feature type="glycosylation site" description="N-linked (GlcNAc...) asparagine" evidence="2">
    <location>
        <position position="304"/>
    </location>
</feature>
<feature type="glycosylation site" description="N-linked (GlcNAc...) asparagine" evidence="2">
    <location>
        <position position="322"/>
    </location>
</feature>
<feature type="glycosylation site" description="N-linked (GlcNAc...) asparagine" evidence="2">
    <location>
        <position position="344"/>
    </location>
</feature>
<accession>C9WMM5</accession>
<sequence length="467" mass="53702">MKKLVLLQFLFFISFARGFTNVYPKPKYCPLLHEEDAGIPLFLTPLIENGKIDEARNKAVIQHKEVEAISSYAGFLTVNKKYNSNMFFWFFPALHDPKTAPVVLWLQGGPGATSMYGLFLENGPFIVTKNKTLKMREYSWNKCHNLLYIDNPVGTGFSFTEDERGYATNETHVGRDVHTALVQFFELFPELQTNDFYVTGESYGGKYVPAVSHAIKDYNIKAKIKINLKGLAIGNGLTDPVNQLDYGDYLYQLGLLDANGRNLFQKYEEQGKNLIKQEKWLEAFDLFDELLDGDITQQPSLYKNLTGFDYYFNYLHEKDPSNDSDYMVEWLQRADVRKAIHVGNRTFIPESKKVEKYMKADVMQSLAVLIADLTQHYRVLIYNGQLDIIVAYPLTENYLQKLKWPGAEKYKTAQRKVWFVGNELAGYSKTVDSLTEVLVRNAGHMVPLDQPKWALDLITRFTHNKGF</sequence>
<dbReference type="EC" id="3.4.16.5" evidence="3"/>
<dbReference type="EMBL" id="FJ765738">
    <property type="protein sequence ID" value="ACN71203.1"/>
    <property type="molecule type" value="mRNA"/>
</dbReference>
<dbReference type="RefSeq" id="NP_001152775.1">
    <property type="nucleotide sequence ID" value="NM_001159303.1"/>
</dbReference>
<dbReference type="SMR" id="C9WMM5"/>
<dbReference type="FunCoup" id="C9WMM5">
    <property type="interactions" value="59"/>
</dbReference>
<dbReference type="STRING" id="7460.C9WMM5"/>
<dbReference type="Allergome" id="6189">
    <property type="allergen name" value="Api m 9"/>
</dbReference>
<dbReference type="Allergome" id="6190">
    <property type="allergen name" value="Api m 9.0101"/>
</dbReference>
<dbReference type="ESTHER" id="apime-vcp">
    <property type="family name" value="Carboxypeptidase_S10"/>
</dbReference>
<dbReference type="MEROPS" id="S10.003"/>
<dbReference type="EnsemblMetazoa" id="NM_001159303">
    <property type="protein sequence ID" value="NP_001152775"/>
    <property type="gene ID" value="LOC410451"/>
</dbReference>
<dbReference type="GeneID" id="410451"/>
<dbReference type="KEGG" id="ame:410451"/>
<dbReference type="InParanoid" id="C9WMM5"/>
<dbReference type="OrthoDB" id="443318at2759"/>
<dbReference type="PhylomeDB" id="C9WMM5"/>
<dbReference type="Proteomes" id="UP000005203">
    <property type="component" value="Linkage group LG13"/>
</dbReference>
<dbReference type="GO" id="GO:0005576">
    <property type="term" value="C:extracellular region"/>
    <property type="evidence" value="ECO:0007669"/>
    <property type="project" value="UniProtKB-SubCell"/>
</dbReference>
<dbReference type="GO" id="GO:0004185">
    <property type="term" value="F:serine-type carboxypeptidase activity"/>
    <property type="evidence" value="ECO:0007669"/>
    <property type="project" value="UniProtKB-EC"/>
</dbReference>
<dbReference type="GO" id="GO:0006508">
    <property type="term" value="P:proteolysis"/>
    <property type="evidence" value="ECO:0007669"/>
    <property type="project" value="UniProtKB-KW"/>
</dbReference>
<dbReference type="FunFam" id="3.40.50.1820:FF:000096">
    <property type="entry name" value="Carboxypeptidase vitellogenic-like"/>
    <property type="match status" value="1"/>
</dbReference>
<dbReference type="Gene3D" id="3.40.50.1820">
    <property type="entry name" value="alpha/beta hydrolase"/>
    <property type="match status" value="1"/>
</dbReference>
<dbReference type="InterPro" id="IPR029058">
    <property type="entry name" value="AB_hydrolase_fold"/>
</dbReference>
<dbReference type="InterPro" id="IPR001563">
    <property type="entry name" value="Peptidase_S10"/>
</dbReference>
<dbReference type="InterPro" id="IPR033124">
    <property type="entry name" value="Ser_caboxypep_his_AS"/>
</dbReference>
<dbReference type="InterPro" id="IPR018202">
    <property type="entry name" value="Ser_caboxypep_ser_AS"/>
</dbReference>
<dbReference type="PANTHER" id="PTHR11802:SF472">
    <property type="entry name" value="SERINE CARBOXYPEPTIDASE CPVL-RELATED"/>
    <property type="match status" value="1"/>
</dbReference>
<dbReference type="PANTHER" id="PTHR11802">
    <property type="entry name" value="SERINE PROTEASE FAMILY S10 SERINE CARBOXYPEPTIDASE"/>
    <property type="match status" value="1"/>
</dbReference>
<dbReference type="Pfam" id="PF00450">
    <property type="entry name" value="Peptidase_S10"/>
    <property type="match status" value="1"/>
</dbReference>
<dbReference type="PRINTS" id="PR00724">
    <property type="entry name" value="CRBOXYPTASEC"/>
</dbReference>
<dbReference type="SUPFAM" id="SSF53474">
    <property type="entry name" value="alpha/beta-Hydrolases"/>
    <property type="match status" value="1"/>
</dbReference>
<dbReference type="PROSITE" id="PS00560">
    <property type="entry name" value="CARBOXYPEPT_SER_HIS"/>
    <property type="match status" value="1"/>
</dbReference>
<dbReference type="PROSITE" id="PS00131">
    <property type="entry name" value="CARBOXYPEPT_SER_SER"/>
    <property type="match status" value="1"/>
</dbReference>
<keyword id="KW-0020">Allergen</keyword>
<keyword id="KW-0121">Carboxypeptidase</keyword>
<keyword id="KW-0325">Glycoprotein</keyword>
<keyword id="KW-0378">Hydrolase</keyword>
<keyword id="KW-0645">Protease</keyword>
<keyword id="KW-1185">Reference proteome</keyword>
<keyword id="KW-0964">Secreted</keyword>
<keyword id="KW-0732">Signal</keyword>
<reference key="1">
    <citation type="submission" date="2009-02" db="EMBL/GenBank/DDBJ databases">
        <title>Identification, recombinant expression and characterization of high molecular weight hymenoptera venom allergens.</title>
        <authorList>
            <person name="Blank S."/>
            <person name="Seismann H."/>
            <person name="Braren I."/>
            <person name="Bockisch B."/>
            <person name="Bredehorst R."/>
            <person name="Ollert M."/>
            <person name="Grunwald T."/>
            <person name="Spillner E."/>
        </authorList>
    </citation>
    <scope>NUCLEOTIDE SEQUENCE [MRNA]</scope>
    <source>
        <tissue>Venom duct</tissue>
    </source>
</reference>
<reference key="2">
    <citation type="journal article" date="2006" name="Nature">
        <title>Insights into social insects from the genome of the honeybee Apis mellifera.</title>
        <authorList>
            <consortium name="Honeybee genome sequencing consortium"/>
        </authorList>
    </citation>
    <scope>NUCLEOTIDE SEQUENCE [LARGE SCALE GENOMIC DNA]</scope>
</reference>
<protein>
    <recommendedName>
        <fullName>Venom serine carboxypeptidase</fullName>
        <ecNumber evidence="3">3.4.16.5</ecNumber>
    </recommendedName>
    <allergenName>Api m 9</allergenName>
</protein>
<evidence type="ECO:0000250" key="1"/>
<evidence type="ECO:0000255" key="2"/>
<evidence type="ECO:0000255" key="3">
    <source>
        <dbReference type="PROSITE-ProRule" id="PRU10074"/>
    </source>
</evidence>
<evidence type="ECO:0000255" key="4">
    <source>
        <dbReference type="PROSITE-ProRule" id="PRU10075"/>
    </source>
</evidence>
<evidence type="ECO:0000305" key="5"/>